<comment type="function">
    <text evidence="1">Involved in transcription antitermination. Required for transcription of ribosomal RNA (rRNA) genes. Binds specifically to the boxA antiterminator sequence of the ribosomal RNA (rrn) operons.</text>
</comment>
<comment type="similarity">
    <text evidence="1">Belongs to the NusB family.</text>
</comment>
<protein>
    <recommendedName>
        <fullName evidence="1">Transcription antitermination protein NusB</fullName>
    </recommendedName>
    <alternativeName>
        <fullName evidence="1">Antitermination factor NusB</fullName>
    </alternativeName>
</protein>
<proteinExistence type="inferred from homology"/>
<feature type="chain" id="PRO_0000265574" description="Transcription antitermination protein NusB">
    <location>
        <begin position="1"/>
        <end position="177"/>
    </location>
</feature>
<feature type="region of interest" description="Disordered" evidence="2">
    <location>
        <begin position="1"/>
        <end position="36"/>
    </location>
</feature>
<gene>
    <name evidence="1" type="primary">nusB</name>
    <name type="ordered locus">Rfer_2670</name>
</gene>
<name>NUSB_ALBFT</name>
<keyword id="KW-1185">Reference proteome</keyword>
<keyword id="KW-0694">RNA-binding</keyword>
<keyword id="KW-0804">Transcription</keyword>
<keyword id="KW-0889">Transcription antitermination</keyword>
<keyword id="KW-0805">Transcription regulation</keyword>
<sequence>MTEQPTKPTGSRPPRQPRTGLTSTGARKAGSKSDRSRAREFALQALYQSLVGKNTVSDIDAFTRDLAGFSKADSLHFDTLLQGCTEQAAALDALLLPLLDRKFAEISPIEHSIMWIGAFELQHCLDVPWRVVLNECVELAKEFGGTDGHKYVNAVLNSLAPSLRAAEVNADRGKTRA</sequence>
<evidence type="ECO:0000255" key="1">
    <source>
        <dbReference type="HAMAP-Rule" id="MF_00073"/>
    </source>
</evidence>
<evidence type="ECO:0000256" key="2">
    <source>
        <dbReference type="SAM" id="MobiDB-lite"/>
    </source>
</evidence>
<dbReference type="EMBL" id="CP000267">
    <property type="protein sequence ID" value="ABD70386.1"/>
    <property type="molecule type" value="Genomic_DNA"/>
</dbReference>
<dbReference type="RefSeq" id="WP_011464954.1">
    <property type="nucleotide sequence ID" value="NC_007908.1"/>
</dbReference>
<dbReference type="SMR" id="Q21V17"/>
<dbReference type="STRING" id="338969.Rfer_2670"/>
<dbReference type="KEGG" id="rfr:Rfer_2670"/>
<dbReference type="eggNOG" id="COG0781">
    <property type="taxonomic scope" value="Bacteria"/>
</dbReference>
<dbReference type="HOGENOM" id="CLU_087843_4_1_4"/>
<dbReference type="OrthoDB" id="9789556at2"/>
<dbReference type="Proteomes" id="UP000008332">
    <property type="component" value="Chromosome"/>
</dbReference>
<dbReference type="GO" id="GO:0005829">
    <property type="term" value="C:cytosol"/>
    <property type="evidence" value="ECO:0007669"/>
    <property type="project" value="TreeGrafter"/>
</dbReference>
<dbReference type="GO" id="GO:0003723">
    <property type="term" value="F:RNA binding"/>
    <property type="evidence" value="ECO:0007669"/>
    <property type="project" value="UniProtKB-UniRule"/>
</dbReference>
<dbReference type="GO" id="GO:0006353">
    <property type="term" value="P:DNA-templated transcription termination"/>
    <property type="evidence" value="ECO:0007669"/>
    <property type="project" value="UniProtKB-UniRule"/>
</dbReference>
<dbReference type="GO" id="GO:0031564">
    <property type="term" value="P:transcription antitermination"/>
    <property type="evidence" value="ECO:0007669"/>
    <property type="project" value="UniProtKB-KW"/>
</dbReference>
<dbReference type="Gene3D" id="1.10.940.10">
    <property type="entry name" value="NusB-like"/>
    <property type="match status" value="1"/>
</dbReference>
<dbReference type="HAMAP" id="MF_00073">
    <property type="entry name" value="NusB"/>
    <property type="match status" value="1"/>
</dbReference>
<dbReference type="InterPro" id="IPR035926">
    <property type="entry name" value="NusB-like_sf"/>
</dbReference>
<dbReference type="InterPro" id="IPR011605">
    <property type="entry name" value="NusB_fam"/>
</dbReference>
<dbReference type="InterPro" id="IPR006027">
    <property type="entry name" value="NusB_RsmB_TIM44"/>
</dbReference>
<dbReference type="NCBIfam" id="TIGR01951">
    <property type="entry name" value="nusB"/>
    <property type="match status" value="1"/>
</dbReference>
<dbReference type="PANTHER" id="PTHR11078:SF3">
    <property type="entry name" value="ANTITERMINATION NUSB DOMAIN-CONTAINING PROTEIN"/>
    <property type="match status" value="1"/>
</dbReference>
<dbReference type="PANTHER" id="PTHR11078">
    <property type="entry name" value="N UTILIZATION SUBSTANCE PROTEIN B-RELATED"/>
    <property type="match status" value="1"/>
</dbReference>
<dbReference type="Pfam" id="PF01029">
    <property type="entry name" value="NusB"/>
    <property type="match status" value="1"/>
</dbReference>
<dbReference type="SUPFAM" id="SSF48013">
    <property type="entry name" value="NusB-like"/>
    <property type="match status" value="1"/>
</dbReference>
<organism>
    <name type="scientific">Albidiferax ferrireducens (strain ATCC BAA-621 / DSM 15236 / T118)</name>
    <name type="common">Rhodoferax ferrireducens</name>
    <dbReference type="NCBI Taxonomy" id="338969"/>
    <lineage>
        <taxon>Bacteria</taxon>
        <taxon>Pseudomonadati</taxon>
        <taxon>Pseudomonadota</taxon>
        <taxon>Betaproteobacteria</taxon>
        <taxon>Burkholderiales</taxon>
        <taxon>Comamonadaceae</taxon>
        <taxon>Rhodoferax</taxon>
    </lineage>
</organism>
<accession>Q21V17</accession>
<reference key="1">
    <citation type="submission" date="2006-02" db="EMBL/GenBank/DDBJ databases">
        <title>Complete sequence of chromosome of Rhodoferax ferrireducens DSM 15236.</title>
        <authorList>
            <person name="Copeland A."/>
            <person name="Lucas S."/>
            <person name="Lapidus A."/>
            <person name="Barry K."/>
            <person name="Detter J.C."/>
            <person name="Glavina del Rio T."/>
            <person name="Hammon N."/>
            <person name="Israni S."/>
            <person name="Pitluck S."/>
            <person name="Brettin T."/>
            <person name="Bruce D."/>
            <person name="Han C."/>
            <person name="Tapia R."/>
            <person name="Gilna P."/>
            <person name="Kiss H."/>
            <person name="Schmutz J."/>
            <person name="Larimer F."/>
            <person name="Land M."/>
            <person name="Kyrpides N."/>
            <person name="Ivanova N."/>
            <person name="Richardson P."/>
        </authorList>
    </citation>
    <scope>NUCLEOTIDE SEQUENCE [LARGE SCALE GENOMIC DNA]</scope>
    <source>
        <strain>ATCC BAA-621 / DSM 15236 / T118</strain>
    </source>
</reference>